<name>RS14Z_ANADE</name>
<gene>
    <name evidence="1" type="primary">rpsZ</name>
    <name evidence="1" type="synonym">rpsN</name>
    <name type="ordered locus">Adeh_1933</name>
</gene>
<proteinExistence type="inferred from homology"/>
<comment type="function">
    <text evidence="1">Binds 16S rRNA, required for the assembly of 30S particles and may also be responsible for determining the conformation of the 16S rRNA at the A site.</text>
</comment>
<comment type="cofactor">
    <cofactor evidence="1">
        <name>Zn(2+)</name>
        <dbReference type="ChEBI" id="CHEBI:29105"/>
    </cofactor>
    <text evidence="1">Binds 1 zinc ion per subunit.</text>
</comment>
<comment type="subunit">
    <text evidence="1">Part of the 30S ribosomal subunit. Contacts proteins S3 and S10.</text>
</comment>
<comment type="similarity">
    <text evidence="1">Belongs to the universal ribosomal protein uS14 family. Zinc-binding uS14 subfamily.</text>
</comment>
<sequence length="61" mass="7206">MAKLSKMAQATRKLKFPVRQYNRCPLCGRPRAFLRKFQMCRICFRKRALQGEITGVIKSSW</sequence>
<keyword id="KW-0479">Metal-binding</keyword>
<keyword id="KW-1185">Reference proteome</keyword>
<keyword id="KW-0687">Ribonucleoprotein</keyword>
<keyword id="KW-0689">Ribosomal protein</keyword>
<keyword id="KW-0694">RNA-binding</keyword>
<keyword id="KW-0699">rRNA-binding</keyword>
<keyword id="KW-0862">Zinc</keyword>
<accession>Q2IJ71</accession>
<reference key="1">
    <citation type="submission" date="2006-01" db="EMBL/GenBank/DDBJ databases">
        <title>Complete sequence of Anaeromyxobacter dehalogenans 2CP-C.</title>
        <authorList>
            <person name="Copeland A."/>
            <person name="Lucas S."/>
            <person name="Lapidus A."/>
            <person name="Barry K."/>
            <person name="Detter J.C."/>
            <person name="Glavina T."/>
            <person name="Hammon N."/>
            <person name="Israni S."/>
            <person name="Pitluck S."/>
            <person name="Brettin T."/>
            <person name="Bruce D."/>
            <person name="Han C."/>
            <person name="Tapia R."/>
            <person name="Gilna P."/>
            <person name="Kiss H."/>
            <person name="Schmutz J."/>
            <person name="Larimer F."/>
            <person name="Land M."/>
            <person name="Kyrpides N."/>
            <person name="Anderson I."/>
            <person name="Sanford R.A."/>
            <person name="Ritalahti K.M."/>
            <person name="Thomas H.S."/>
            <person name="Kirby J.R."/>
            <person name="Zhulin I.B."/>
            <person name="Loeffler F.E."/>
            <person name="Richardson P."/>
        </authorList>
    </citation>
    <scope>NUCLEOTIDE SEQUENCE [LARGE SCALE GENOMIC DNA]</scope>
    <source>
        <strain>2CP-C</strain>
    </source>
</reference>
<dbReference type="EMBL" id="CP000251">
    <property type="protein sequence ID" value="ABC81704.1"/>
    <property type="molecule type" value="Genomic_DNA"/>
</dbReference>
<dbReference type="RefSeq" id="WP_011420987.1">
    <property type="nucleotide sequence ID" value="NC_007760.1"/>
</dbReference>
<dbReference type="SMR" id="Q2IJ71"/>
<dbReference type="STRING" id="290397.Adeh_1933"/>
<dbReference type="KEGG" id="ade:Adeh_1933"/>
<dbReference type="eggNOG" id="COG0199">
    <property type="taxonomic scope" value="Bacteria"/>
</dbReference>
<dbReference type="HOGENOM" id="CLU_139869_3_0_7"/>
<dbReference type="OrthoDB" id="9810484at2"/>
<dbReference type="Proteomes" id="UP000001935">
    <property type="component" value="Chromosome"/>
</dbReference>
<dbReference type="GO" id="GO:0005737">
    <property type="term" value="C:cytoplasm"/>
    <property type="evidence" value="ECO:0007669"/>
    <property type="project" value="UniProtKB-ARBA"/>
</dbReference>
<dbReference type="GO" id="GO:0015935">
    <property type="term" value="C:small ribosomal subunit"/>
    <property type="evidence" value="ECO:0007669"/>
    <property type="project" value="TreeGrafter"/>
</dbReference>
<dbReference type="GO" id="GO:0019843">
    <property type="term" value="F:rRNA binding"/>
    <property type="evidence" value="ECO:0007669"/>
    <property type="project" value="UniProtKB-UniRule"/>
</dbReference>
<dbReference type="GO" id="GO:0003735">
    <property type="term" value="F:structural constituent of ribosome"/>
    <property type="evidence" value="ECO:0007669"/>
    <property type="project" value="InterPro"/>
</dbReference>
<dbReference type="GO" id="GO:0008270">
    <property type="term" value="F:zinc ion binding"/>
    <property type="evidence" value="ECO:0007669"/>
    <property type="project" value="UniProtKB-UniRule"/>
</dbReference>
<dbReference type="GO" id="GO:0006412">
    <property type="term" value="P:translation"/>
    <property type="evidence" value="ECO:0007669"/>
    <property type="project" value="UniProtKB-UniRule"/>
</dbReference>
<dbReference type="Gene3D" id="4.10.830.10">
    <property type="entry name" value="30s Ribosomal Protein S14, Chain N"/>
    <property type="match status" value="1"/>
</dbReference>
<dbReference type="HAMAP" id="MF_01364_B">
    <property type="entry name" value="Ribosomal_uS14_2_B"/>
    <property type="match status" value="1"/>
</dbReference>
<dbReference type="InterPro" id="IPR001209">
    <property type="entry name" value="Ribosomal_uS14"/>
</dbReference>
<dbReference type="InterPro" id="IPR023053">
    <property type="entry name" value="Ribosomal_uS14_bact"/>
</dbReference>
<dbReference type="InterPro" id="IPR018271">
    <property type="entry name" value="Ribosomal_uS14_CS"/>
</dbReference>
<dbReference type="InterPro" id="IPR043140">
    <property type="entry name" value="Ribosomal_uS14_sf"/>
</dbReference>
<dbReference type="NCBIfam" id="NF005974">
    <property type="entry name" value="PRK08061.1"/>
    <property type="match status" value="1"/>
</dbReference>
<dbReference type="PANTHER" id="PTHR19836">
    <property type="entry name" value="30S RIBOSOMAL PROTEIN S14"/>
    <property type="match status" value="1"/>
</dbReference>
<dbReference type="PANTHER" id="PTHR19836:SF19">
    <property type="entry name" value="SMALL RIBOSOMAL SUBUNIT PROTEIN US14M"/>
    <property type="match status" value="1"/>
</dbReference>
<dbReference type="Pfam" id="PF00253">
    <property type="entry name" value="Ribosomal_S14"/>
    <property type="match status" value="1"/>
</dbReference>
<dbReference type="SUPFAM" id="SSF57716">
    <property type="entry name" value="Glucocorticoid receptor-like (DNA-binding domain)"/>
    <property type="match status" value="1"/>
</dbReference>
<dbReference type="PROSITE" id="PS00527">
    <property type="entry name" value="RIBOSOMAL_S14"/>
    <property type="match status" value="1"/>
</dbReference>
<organism>
    <name type="scientific">Anaeromyxobacter dehalogenans (strain 2CP-C)</name>
    <dbReference type="NCBI Taxonomy" id="290397"/>
    <lineage>
        <taxon>Bacteria</taxon>
        <taxon>Pseudomonadati</taxon>
        <taxon>Myxococcota</taxon>
        <taxon>Myxococcia</taxon>
        <taxon>Myxococcales</taxon>
        <taxon>Cystobacterineae</taxon>
        <taxon>Anaeromyxobacteraceae</taxon>
        <taxon>Anaeromyxobacter</taxon>
    </lineage>
</organism>
<feature type="chain" id="PRO_0000269076" description="Small ribosomal subunit protein uS14">
    <location>
        <begin position="1"/>
        <end position="61"/>
    </location>
</feature>
<feature type="binding site" evidence="1">
    <location>
        <position position="24"/>
    </location>
    <ligand>
        <name>Zn(2+)</name>
        <dbReference type="ChEBI" id="CHEBI:29105"/>
    </ligand>
</feature>
<feature type="binding site" evidence="1">
    <location>
        <position position="27"/>
    </location>
    <ligand>
        <name>Zn(2+)</name>
        <dbReference type="ChEBI" id="CHEBI:29105"/>
    </ligand>
</feature>
<feature type="binding site" evidence="1">
    <location>
        <position position="40"/>
    </location>
    <ligand>
        <name>Zn(2+)</name>
        <dbReference type="ChEBI" id="CHEBI:29105"/>
    </ligand>
</feature>
<feature type="binding site" evidence="1">
    <location>
        <position position="43"/>
    </location>
    <ligand>
        <name>Zn(2+)</name>
        <dbReference type="ChEBI" id="CHEBI:29105"/>
    </ligand>
</feature>
<evidence type="ECO:0000255" key="1">
    <source>
        <dbReference type="HAMAP-Rule" id="MF_01364"/>
    </source>
</evidence>
<evidence type="ECO:0000305" key="2"/>
<protein>
    <recommendedName>
        <fullName evidence="1">Small ribosomal subunit protein uS14</fullName>
    </recommendedName>
    <alternativeName>
        <fullName evidence="2">30S ribosomal protein S14 type Z</fullName>
    </alternativeName>
</protein>